<evidence type="ECO:0000255" key="1">
    <source>
        <dbReference type="HAMAP-Rule" id="MF_00658"/>
    </source>
</evidence>
<gene>
    <name evidence="1" type="primary">rlmH</name>
    <name type="ordered locus">Deide_14650</name>
</gene>
<organism>
    <name type="scientific">Deinococcus deserti (strain DSM 17065 / CIP 109153 / LMG 22923 / VCD115)</name>
    <dbReference type="NCBI Taxonomy" id="546414"/>
    <lineage>
        <taxon>Bacteria</taxon>
        <taxon>Thermotogati</taxon>
        <taxon>Deinococcota</taxon>
        <taxon>Deinococci</taxon>
        <taxon>Deinococcales</taxon>
        <taxon>Deinococcaceae</taxon>
        <taxon>Deinococcus</taxon>
    </lineage>
</organism>
<proteinExistence type="inferred from homology"/>
<sequence length="145" mass="16013">MRLHLITVGEPKLTYARLGWEEYEKRLRRYHKLQVTRVSGRTQAQESEAVRRAAGKAPLVLLDPRGRQFSSPDLSAYLDAQAVGGVGELAFAIGGPDGHTDELRSSAHLLWGLGQLTLPHDLAMVVLVEALYRASTISAGEPYHR</sequence>
<feature type="chain" id="PRO_1000212447" description="Ribosomal RNA large subunit methyltransferase H">
    <location>
        <begin position="1"/>
        <end position="145"/>
    </location>
</feature>
<feature type="binding site" evidence="1">
    <location>
        <position position="62"/>
    </location>
    <ligand>
        <name>S-adenosyl-L-methionine</name>
        <dbReference type="ChEBI" id="CHEBI:59789"/>
    </ligand>
</feature>
<feature type="binding site" evidence="1">
    <location>
        <position position="94"/>
    </location>
    <ligand>
        <name>S-adenosyl-L-methionine</name>
        <dbReference type="ChEBI" id="CHEBI:59789"/>
    </ligand>
</feature>
<feature type="binding site" evidence="1">
    <location>
        <begin position="113"/>
        <end position="118"/>
    </location>
    <ligand>
        <name>S-adenosyl-L-methionine</name>
        <dbReference type="ChEBI" id="CHEBI:59789"/>
    </ligand>
</feature>
<reference key="1">
    <citation type="journal article" date="2009" name="PLoS Genet.">
        <title>Alliance of proteomics and genomics to unravel the specificities of Sahara bacterium Deinococcus deserti.</title>
        <authorList>
            <person name="de Groot A."/>
            <person name="Dulermo R."/>
            <person name="Ortet P."/>
            <person name="Blanchard L."/>
            <person name="Guerin P."/>
            <person name="Fernandez B."/>
            <person name="Vacherie B."/>
            <person name="Dossat C."/>
            <person name="Jolivet E."/>
            <person name="Siguier P."/>
            <person name="Chandler M."/>
            <person name="Barakat M."/>
            <person name="Dedieu A."/>
            <person name="Barbe V."/>
            <person name="Heulin T."/>
            <person name="Sommer S."/>
            <person name="Achouak W."/>
            <person name="Armengaud J."/>
        </authorList>
    </citation>
    <scope>NUCLEOTIDE SEQUENCE [LARGE SCALE GENOMIC DNA]</scope>
    <source>
        <strain>DSM 17065 / CIP 109153 / LMG 22923 / VCD115</strain>
    </source>
</reference>
<keyword id="KW-0963">Cytoplasm</keyword>
<keyword id="KW-0489">Methyltransferase</keyword>
<keyword id="KW-1185">Reference proteome</keyword>
<keyword id="KW-0698">rRNA processing</keyword>
<keyword id="KW-0949">S-adenosyl-L-methionine</keyword>
<keyword id="KW-0808">Transferase</keyword>
<protein>
    <recommendedName>
        <fullName evidence="1">Ribosomal RNA large subunit methyltransferase H</fullName>
        <ecNumber evidence="1">2.1.1.177</ecNumber>
    </recommendedName>
    <alternativeName>
        <fullName evidence="1">23S rRNA (pseudouridine1915-N3)-methyltransferase</fullName>
    </alternativeName>
    <alternativeName>
        <fullName evidence="1">23S rRNA m3Psi1915 methyltransferase</fullName>
    </alternativeName>
    <alternativeName>
        <fullName evidence="1">rRNA (pseudouridine-N3-)-methyltransferase RlmH</fullName>
    </alternativeName>
</protein>
<dbReference type="EC" id="2.1.1.177" evidence="1"/>
<dbReference type="EMBL" id="CP001114">
    <property type="protein sequence ID" value="ACO46418.1"/>
    <property type="molecule type" value="Genomic_DNA"/>
</dbReference>
<dbReference type="RefSeq" id="WP_012693541.1">
    <property type="nucleotide sequence ID" value="NC_012526.1"/>
</dbReference>
<dbReference type="SMR" id="C1CW51"/>
<dbReference type="STRING" id="546414.Deide_14650"/>
<dbReference type="PaxDb" id="546414-Deide_14650"/>
<dbReference type="KEGG" id="ddr:Deide_14650"/>
<dbReference type="eggNOG" id="COG1576">
    <property type="taxonomic scope" value="Bacteria"/>
</dbReference>
<dbReference type="HOGENOM" id="CLU_100552_1_0_0"/>
<dbReference type="OrthoDB" id="9806643at2"/>
<dbReference type="Proteomes" id="UP000002208">
    <property type="component" value="Chromosome"/>
</dbReference>
<dbReference type="GO" id="GO:0005737">
    <property type="term" value="C:cytoplasm"/>
    <property type="evidence" value="ECO:0007669"/>
    <property type="project" value="UniProtKB-SubCell"/>
</dbReference>
<dbReference type="GO" id="GO:0070038">
    <property type="term" value="F:rRNA (pseudouridine-N3-)-methyltransferase activity"/>
    <property type="evidence" value="ECO:0007669"/>
    <property type="project" value="UniProtKB-UniRule"/>
</dbReference>
<dbReference type="CDD" id="cd18081">
    <property type="entry name" value="RlmH-like"/>
    <property type="match status" value="1"/>
</dbReference>
<dbReference type="Gene3D" id="3.40.1280.10">
    <property type="match status" value="1"/>
</dbReference>
<dbReference type="HAMAP" id="MF_00658">
    <property type="entry name" value="23SrRNA_methyltr_H"/>
    <property type="match status" value="1"/>
</dbReference>
<dbReference type="InterPro" id="IPR029028">
    <property type="entry name" value="Alpha/beta_knot_MTases"/>
</dbReference>
<dbReference type="InterPro" id="IPR003742">
    <property type="entry name" value="RlmH-like"/>
</dbReference>
<dbReference type="InterPro" id="IPR029026">
    <property type="entry name" value="tRNA_m1G_MTases_N"/>
</dbReference>
<dbReference type="PANTHER" id="PTHR33603">
    <property type="entry name" value="METHYLTRANSFERASE"/>
    <property type="match status" value="1"/>
</dbReference>
<dbReference type="PANTHER" id="PTHR33603:SF1">
    <property type="entry name" value="RIBOSOMAL RNA LARGE SUBUNIT METHYLTRANSFERASE H"/>
    <property type="match status" value="1"/>
</dbReference>
<dbReference type="Pfam" id="PF02590">
    <property type="entry name" value="SPOUT_MTase"/>
    <property type="match status" value="1"/>
</dbReference>
<dbReference type="PIRSF" id="PIRSF004505">
    <property type="entry name" value="MT_bac"/>
    <property type="match status" value="1"/>
</dbReference>
<dbReference type="SUPFAM" id="SSF75217">
    <property type="entry name" value="alpha/beta knot"/>
    <property type="match status" value="1"/>
</dbReference>
<name>RLMH_DEIDV</name>
<accession>C1CW51</accession>
<comment type="function">
    <text evidence="1">Specifically methylates the pseudouridine at position 1915 (m3Psi1915) in 23S rRNA.</text>
</comment>
<comment type="catalytic activity">
    <reaction evidence="1">
        <text>pseudouridine(1915) in 23S rRNA + S-adenosyl-L-methionine = N(3)-methylpseudouridine(1915) in 23S rRNA + S-adenosyl-L-homocysteine + H(+)</text>
        <dbReference type="Rhea" id="RHEA:42752"/>
        <dbReference type="Rhea" id="RHEA-COMP:10221"/>
        <dbReference type="Rhea" id="RHEA-COMP:10222"/>
        <dbReference type="ChEBI" id="CHEBI:15378"/>
        <dbReference type="ChEBI" id="CHEBI:57856"/>
        <dbReference type="ChEBI" id="CHEBI:59789"/>
        <dbReference type="ChEBI" id="CHEBI:65314"/>
        <dbReference type="ChEBI" id="CHEBI:74486"/>
        <dbReference type="EC" id="2.1.1.177"/>
    </reaction>
</comment>
<comment type="subunit">
    <text evidence="1">Homodimer.</text>
</comment>
<comment type="subcellular location">
    <subcellularLocation>
        <location evidence="1">Cytoplasm</location>
    </subcellularLocation>
</comment>
<comment type="similarity">
    <text evidence="1">Belongs to the RNA methyltransferase RlmH family.</text>
</comment>